<proteinExistence type="inferred from homology"/>
<reference key="1">
    <citation type="journal article" date="2002" name="Genome Res.">
        <title>A complete sequence of the T. tengcongensis genome.</title>
        <authorList>
            <person name="Bao Q."/>
            <person name="Tian Y."/>
            <person name="Li W."/>
            <person name="Xu Z."/>
            <person name="Xuan Z."/>
            <person name="Hu S."/>
            <person name="Dong W."/>
            <person name="Yang J."/>
            <person name="Chen Y."/>
            <person name="Xue Y."/>
            <person name="Xu Y."/>
            <person name="Lai X."/>
            <person name="Huang L."/>
            <person name="Dong X."/>
            <person name="Ma Y."/>
            <person name="Ling L."/>
            <person name="Tan H."/>
            <person name="Chen R."/>
            <person name="Wang J."/>
            <person name="Yu J."/>
            <person name="Yang H."/>
        </authorList>
    </citation>
    <scope>NUCLEOTIDE SEQUENCE [LARGE SCALE GENOMIC DNA]</scope>
    <source>
        <strain>DSM 15242 / JCM 11007 / NBRC 100824 / MB4</strain>
    </source>
</reference>
<feature type="chain" id="PRO_0000213032" description="UPF0340 protein TTE0860">
    <location>
        <begin position="1"/>
        <end position="184"/>
    </location>
</feature>
<comment type="similarity">
    <text evidence="1">Belongs to the UPF0340 family.</text>
</comment>
<sequence>MDLKEISKQTEEVIEELLDIANLKPGSLFVLGGSTSEILGKKVGTAGSLDVAKAVVDPILEAIHKRGLYLAVQGCEHINRALLVEEEAKDKYGLEEVNVIPHEHAGGSIQTYAYQQFKNPVMVENLKGLGHAGLDIGLVLIGMHLRPVVVPVRLSRNKIGEATIVAARTRPKMVGGERARYKKL</sequence>
<accession>Q8RBG0</accession>
<keyword id="KW-1185">Reference proteome</keyword>
<gene>
    <name type="ordered locus">TTE0860</name>
</gene>
<evidence type="ECO:0000255" key="1">
    <source>
        <dbReference type="HAMAP-Rule" id="MF_00800"/>
    </source>
</evidence>
<name>Y860_CALS4</name>
<organism>
    <name type="scientific">Caldanaerobacter subterraneus subsp. tengcongensis (strain DSM 15242 / JCM 11007 / NBRC 100824 / MB4)</name>
    <name type="common">Thermoanaerobacter tengcongensis</name>
    <dbReference type="NCBI Taxonomy" id="273068"/>
    <lineage>
        <taxon>Bacteria</taxon>
        <taxon>Bacillati</taxon>
        <taxon>Bacillota</taxon>
        <taxon>Clostridia</taxon>
        <taxon>Thermoanaerobacterales</taxon>
        <taxon>Thermoanaerobacteraceae</taxon>
        <taxon>Caldanaerobacter</taxon>
    </lineage>
</organism>
<protein>
    <recommendedName>
        <fullName evidence="1">UPF0340 protein TTE0860</fullName>
    </recommendedName>
</protein>
<dbReference type="EMBL" id="AE008691">
    <property type="protein sequence ID" value="AAM24116.1"/>
    <property type="molecule type" value="Genomic_DNA"/>
</dbReference>
<dbReference type="RefSeq" id="WP_011025248.1">
    <property type="nucleotide sequence ID" value="NZ_JANUCV010000001.1"/>
</dbReference>
<dbReference type="SMR" id="Q8RBG0"/>
<dbReference type="STRING" id="273068.TTE0860"/>
<dbReference type="KEGG" id="tte:TTE0860"/>
<dbReference type="eggNOG" id="COG4475">
    <property type="taxonomic scope" value="Bacteria"/>
</dbReference>
<dbReference type="HOGENOM" id="CLU_106658_0_0_9"/>
<dbReference type="OrthoDB" id="9803187at2"/>
<dbReference type="Proteomes" id="UP000000555">
    <property type="component" value="Chromosome"/>
</dbReference>
<dbReference type="Gene3D" id="3.40.50.10360">
    <property type="entry name" value="Hypothetical protein TT1679"/>
    <property type="match status" value="1"/>
</dbReference>
<dbReference type="HAMAP" id="MF_00800">
    <property type="entry name" value="UPF0340"/>
    <property type="match status" value="1"/>
</dbReference>
<dbReference type="InterPro" id="IPR028345">
    <property type="entry name" value="Antibiotic_NAT-like"/>
</dbReference>
<dbReference type="InterPro" id="IPR006340">
    <property type="entry name" value="DUF436"/>
</dbReference>
<dbReference type="NCBIfam" id="TIGR01440">
    <property type="entry name" value="TIGR01440 family protein"/>
    <property type="match status" value="1"/>
</dbReference>
<dbReference type="Pfam" id="PF04260">
    <property type="entry name" value="DUF436"/>
    <property type="match status" value="1"/>
</dbReference>
<dbReference type="PIRSF" id="PIRSF007510">
    <property type="entry name" value="UCP007510"/>
    <property type="match status" value="1"/>
</dbReference>
<dbReference type="SUPFAM" id="SSF110710">
    <property type="entry name" value="TTHA0583/YokD-like"/>
    <property type="match status" value="1"/>
</dbReference>